<sequence>MKIKLNNVRLAFPELFEPTQVSGQGAFKYRANFLIPKSRTDLIEEIKAGIKHVIGEKWGNKDIEKIYNSICNNPNRFCLRDGDSKEYDGYAGNLYLSASNKSRPLVIDRNTSPLTAQDGRPYSGCYVNATVEFYGYDNNGKGVSASLRGVQFFRDGDAFTGGGVASVEEFDDLSMAEEEELLAS</sequence>
<name>VP50_BPAPS</name>
<organism>
    <name type="scientific">Acyrthosiphon pisum secondary endosymbiont phage 1</name>
    <name type="common">Bacteriophage APSE-1</name>
    <dbReference type="NCBI Taxonomy" id="2682836"/>
    <lineage>
        <taxon>Viruses</taxon>
        <taxon>Duplodnaviria</taxon>
        <taxon>Heunggongvirae</taxon>
        <taxon>Uroviricota</taxon>
        <taxon>Caudoviricetes</taxon>
        <taxon>Sendosyvirus</taxon>
        <taxon>Sendosyvirus APSE1</taxon>
    </lineage>
</organism>
<protein>
    <recommendedName>
        <fullName>Putative protein p50</fullName>
    </recommendedName>
</protein>
<organismHost>
    <name type="scientific">Escherichia coli</name>
    <dbReference type="NCBI Taxonomy" id="562"/>
</organismHost>
<proteinExistence type="predicted"/>
<keyword id="KW-1185">Reference proteome</keyword>
<gene>
    <name type="primary">50</name>
</gene>
<reference key="1">
    <citation type="journal article" date="1999" name="Virology">
        <title>Isolation and characterization of APSE-1, a bacteriophage infecting the secondary endosymbiont of acyrthosiphon pisum.</title>
        <authorList>
            <person name="van der Wilk F."/>
            <person name="Dullemans A.M."/>
            <person name="Verbeek M."/>
            <person name="van den Heuvel J.F.J.M."/>
        </authorList>
    </citation>
    <scope>NUCLEOTIDE SEQUENCE [LARGE SCALE GENOMIC DNA]</scope>
</reference>
<feature type="chain" id="PRO_0000077874" description="Putative protein p50">
    <location>
        <begin position="1"/>
        <end position="184"/>
    </location>
</feature>
<dbReference type="EMBL" id="AF157835">
    <property type="protein sequence ID" value="AAF03993.1"/>
    <property type="molecule type" value="Genomic_DNA"/>
</dbReference>
<dbReference type="RefSeq" id="NP_051011.1">
    <property type="nucleotide sequence ID" value="NC_000935.1"/>
</dbReference>
<dbReference type="SMR" id="Q9T1P8"/>
<dbReference type="KEGG" id="vg:1262344"/>
<dbReference type="Proteomes" id="UP000000853">
    <property type="component" value="Genome"/>
</dbReference>
<dbReference type="Gene3D" id="2.40.50.140">
    <property type="entry name" value="Nucleic acid-binding proteins"/>
    <property type="match status" value="1"/>
</dbReference>
<dbReference type="InterPro" id="IPR022595">
    <property type="entry name" value="Enc34_ssDNA-bd"/>
</dbReference>
<dbReference type="InterPro" id="IPR012340">
    <property type="entry name" value="NA-bd_OB-fold"/>
</dbReference>
<dbReference type="Pfam" id="PF10991">
    <property type="entry name" value="Enc34_ssDNA-bd"/>
    <property type="match status" value="1"/>
</dbReference>
<dbReference type="SUPFAM" id="SSF50249">
    <property type="entry name" value="Nucleic acid-binding proteins"/>
    <property type="match status" value="1"/>
</dbReference>
<accession>Q9T1P8</accession>